<keyword id="KW-1003">Cell membrane</keyword>
<keyword id="KW-0963">Cytoplasm</keyword>
<keyword id="KW-0342">GTP-binding</keyword>
<keyword id="KW-0449">Lipoprotein</keyword>
<keyword id="KW-0472">Membrane</keyword>
<keyword id="KW-0488">Methylation</keyword>
<keyword id="KW-0547">Nucleotide-binding</keyword>
<keyword id="KW-0636">Prenylation</keyword>
<keyword id="KW-1185">Reference proteome</keyword>
<proteinExistence type="evidence at transcript level"/>
<dbReference type="EMBL" id="AB031482">
    <property type="protein sequence ID" value="BAA96292.1"/>
    <property type="molecule type" value="mRNA"/>
</dbReference>
<dbReference type="EMBL" id="BC061760">
    <property type="protein sequence ID" value="AAH61760.1"/>
    <property type="molecule type" value="mRNA"/>
</dbReference>
<dbReference type="RefSeq" id="NP_445974.1">
    <property type="nucleotide sequence ID" value="NM_053522.2"/>
</dbReference>
<dbReference type="SMR" id="Q9JJL4"/>
<dbReference type="FunCoup" id="Q9JJL4">
    <property type="interactions" value="719"/>
</dbReference>
<dbReference type="STRING" id="10116.ENSRNOP00000020822"/>
<dbReference type="GlyGen" id="Q9JJL4">
    <property type="glycosylation" value="1 site"/>
</dbReference>
<dbReference type="PhosphoSitePlus" id="Q9JJL4"/>
<dbReference type="jPOST" id="Q9JJL4"/>
<dbReference type="PaxDb" id="10116-ENSRNOP00000020822"/>
<dbReference type="GeneID" id="85428"/>
<dbReference type="KEGG" id="rno:85428"/>
<dbReference type="UCSC" id="RGD:621626">
    <property type="organism name" value="rat"/>
</dbReference>
<dbReference type="AGR" id="RGD:621626"/>
<dbReference type="CTD" id="23433"/>
<dbReference type="RGD" id="621626">
    <property type="gene designation" value="Rhoq"/>
</dbReference>
<dbReference type="eggNOG" id="KOG0393">
    <property type="taxonomic scope" value="Eukaryota"/>
</dbReference>
<dbReference type="HOGENOM" id="CLU_041217_21_3_1"/>
<dbReference type="InParanoid" id="Q9JJL4"/>
<dbReference type="OrthoDB" id="8830751at2759"/>
<dbReference type="PhylomeDB" id="Q9JJL4"/>
<dbReference type="TreeFam" id="TF101109"/>
<dbReference type="Reactome" id="R-RNO-5627083">
    <property type="pathway name" value="RHO GTPases regulate CFTR trafficking"/>
</dbReference>
<dbReference type="Reactome" id="R-RNO-9013406">
    <property type="pathway name" value="RHOQ GTPase cycle"/>
</dbReference>
<dbReference type="PRO" id="PR:Q9JJL4"/>
<dbReference type="Proteomes" id="UP000002494">
    <property type="component" value="Chromosome 6"/>
</dbReference>
<dbReference type="Bgee" id="ENSRNOG00000015415">
    <property type="expression patterns" value="Expressed in quadriceps femoris and 20 other cell types or tissues"/>
</dbReference>
<dbReference type="GO" id="GO:0005884">
    <property type="term" value="C:actin filament"/>
    <property type="evidence" value="ECO:0000266"/>
    <property type="project" value="RGD"/>
</dbReference>
<dbReference type="GO" id="GO:0005737">
    <property type="term" value="C:cytoplasm"/>
    <property type="evidence" value="ECO:0007669"/>
    <property type="project" value="UniProtKB-SubCell"/>
</dbReference>
<dbReference type="GO" id="GO:0045121">
    <property type="term" value="C:membrane raft"/>
    <property type="evidence" value="ECO:0000266"/>
    <property type="project" value="RGD"/>
</dbReference>
<dbReference type="GO" id="GO:0005886">
    <property type="term" value="C:plasma membrane"/>
    <property type="evidence" value="ECO:0000266"/>
    <property type="project" value="RGD"/>
</dbReference>
<dbReference type="GO" id="GO:0032427">
    <property type="term" value="F:GBD domain binding"/>
    <property type="evidence" value="ECO:0000266"/>
    <property type="project" value="RGD"/>
</dbReference>
<dbReference type="GO" id="GO:0005525">
    <property type="term" value="F:GTP binding"/>
    <property type="evidence" value="ECO:0000318"/>
    <property type="project" value="GO_Central"/>
</dbReference>
<dbReference type="GO" id="GO:0003924">
    <property type="term" value="F:GTPase activity"/>
    <property type="evidence" value="ECO:0000266"/>
    <property type="project" value="RGD"/>
</dbReference>
<dbReference type="GO" id="GO:0005522">
    <property type="term" value="F:profilin binding"/>
    <property type="evidence" value="ECO:0000266"/>
    <property type="project" value="RGD"/>
</dbReference>
<dbReference type="GO" id="GO:0019901">
    <property type="term" value="F:protein kinase binding"/>
    <property type="evidence" value="ECO:0000318"/>
    <property type="project" value="GO_Central"/>
</dbReference>
<dbReference type="GO" id="GO:0007015">
    <property type="term" value="P:actin filament organization"/>
    <property type="evidence" value="ECO:0000318"/>
    <property type="project" value="GO_Central"/>
</dbReference>
<dbReference type="GO" id="GO:0032869">
    <property type="term" value="P:cellular response to insulin stimulus"/>
    <property type="evidence" value="ECO:0000266"/>
    <property type="project" value="RGD"/>
</dbReference>
<dbReference type="GO" id="GO:0030866">
    <property type="term" value="P:cortical actin cytoskeleton organization"/>
    <property type="evidence" value="ECO:0000266"/>
    <property type="project" value="RGD"/>
</dbReference>
<dbReference type="GO" id="GO:0006897">
    <property type="term" value="P:endocytosis"/>
    <property type="evidence" value="ECO:0000318"/>
    <property type="project" value="GO_Central"/>
</dbReference>
<dbReference type="GO" id="GO:0030010">
    <property type="term" value="P:establishment of cell polarity"/>
    <property type="evidence" value="ECO:0000318"/>
    <property type="project" value="GO_Central"/>
</dbReference>
<dbReference type="GO" id="GO:0046039">
    <property type="term" value="P:GTP metabolic process"/>
    <property type="evidence" value="ECO:0000266"/>
    <property type="project" value="RGD"/>
</dbReference>
<dbReference type="GO" id="GO:0008286">
    <property type="term" value="P:insulin receptor signaling pathway"/>
    <property type="evidence" value="ECO:0000266"/>
    <property type="project" value="RGD"/>
</dbReference>
<dbReference type="GO" id="GO:1903077">
    <property type="term" value="P:negative regulation of protein localization to plasma membrane"/>
    <property type="evidence" value="ECO:0000266"/>
    <property type="project" value="RGD"/>
</dbReference>
<dbReference type="GO" id="GO:0046326">
    <property type="term" value="P:positive regulation of D-glucose import"/>
    <property type="evidence" value="ECO:0000266"/>
    <property type="project" value="RGD"/>
</dbReference>
<dbReference type="GO" id="GO:0051491">
    <property type="term" value="P:positive regulation of filopodium assembly"/>
    <property type="evidence" value="ECO:0000266"/>
    <property type="project" value="RGD"/>
</dbReference>
<dbReference type="GO" id="GO:0045944">
    <property type="term" value="P:positive regulation of transcription by RNA polymerase II"/>
    <property type="evidence" value="ECO:0000266"/>
    <property type="project" value="RGD"/>
</dbReference>
<dbReference type="GO" id="GO:0008360">
    <property type="term" value="P:regulation of cell shape"/>
    <property type="evidence" value="ECO:0000266"/>
    <property type="project" value="RGD"/>
</dbReference>
<dbReference type="GO" id="GO:0007165">
    <property type="term" value="P:signal transduction"/>
    <property type="evidence" value="ECO:0000318"/>
    <property type="project" value="GO_Central"/>
</dbReference>
<dbReference type="GO" id="GO:0007264">
    <property type="term" value="P:small GTPase-mediated signal transduction"/>
    <property type="evidence" value="ECO:0007669"/>
    <property type="project" value="InterPro"/>
</dbReference>
<dbReference type="CDD" id="cd04135">
    <property type="entry name" value="Tc10"/>
    <property type="match status" value="1"/>
</dbReference>
<dbReference type="FunFam" id="3.40.50.300:FF:000438">
    <property type="entry name" value="Rho-related GTP-binding protein RhoJ"/>
    <property type="match status" value="1"/>
</dbReference>
<dbReference type="Gene3D" id="3.40.50.300">
    <property type="entry name" value="P-loop containing nucleotide triphosphate hydrolases"/>
    <property type="match status" value="1"/>
</dbReference>
<dbReference type="InterPro" id="IPR027417">
    <property type="entry name" value="P-loop_NTPase"/>
</dbReference>
<dbReference type="InterPro" id="IPR005225">
    <property type="entry name" value="Small_GTP-bd"/>
</dbReference>
<dbReference type="InterPro" id="IPR001806">
    <property type="entry name" value="Small_GTPase"/>
</dbReference>
<dbReference type="InterPro" id="IPR003578">
    <property type="entry name" value="Small_GTPase_Rho"/>
</dbReference>
<dbReference type="NCBIfam" id="TIGR00231">
    <property type="entry name" value="small_GTP"/>
    <property type="match status" value="1"/>
</dbReference>
<dbReference type="PANTHER" id="PTHR24072">
    <property type="entry name" value="RHO FAMILY GTPASE"/>
    <property type="match status" value="1"/>
</dbReference>
<dbReference type="Pfam" id="PF00071">
    <property type="entry name" value="Ras"/>
    <property type="match status" value="1"/>
</dbReference>
<dbReference type="PRINTS" id="PR00449">
    <property type="entry name" value="RASTRNSFRMNG"/>
</dbReference>
<dbReference type="SMART" id="SM00175">
    <property type="entry name" value="RAB"/>
    <property type="match status" value="1"/>
</dbReference>
<dbReference type="SMART" id="SM00173">
    <property type="entry name" value="RAS"/>
    <property type="match status" value="1"/>
</dbReference>
<dbReference type="SMART" id="SM00174">
    <property type="entry name" value="RHO"/>
    <property type="match status" value="1"/>
</dbReference>
<dbReference type="SUPFAM" id="SSF52540">
    <property type="entry name" value="P-loop containing nucleoside triphosphate hydrolases"/>
    <property type="match status" value="1"/>
</dbReference>
<dbReference type="PROSITE" id="PS51420">
    <property type="entry name" value="RHO"/>
    <property type="match status" value="1"/>
</dbReference>
<sequence>MAHGPGALMLKCVVVGDGAVGKTCLLMSYANDAFPEEYVPTVFDHYAVSVTVGGKQYLLGLYDTAGQEDYDRLRPLSYPMTDVFLICFSVVNPASFQNVKEEWVPELKEYAPNVPFLLIGTQIDLRDDPKTLARLNDMKEKPVCVEQGQKLAKEIGACCYVECSALTQKGLKTVFDEAIIAILTPKKHTVKKRIGSRCINCCLIT</sequence>
<reference key="1">
    <citation type="journal article" date="2000" name="J. Neurosci.">
        <title>The small GTP-binding protein TC10 promotes nerve elongation in neuronal cells, and its expression is induced during nerve regeneration in rats.</title>
        <authorList>
            <person name="Tanabe K."/>
            <person name="Tachibana T."/>
            <person name="Yamashita T."/>
            <person name="Che Y.H."/>
            <person name="Yoneda Y."/>
            <person name="Ochi T."/>
            <person name="Tohyama M."/>
            <person name="Yoshikawa H."/>
            <person name="Kiyama H."/>
        </authorList>
    </citation>
    <scope>NUCLEOTIDE SEQUENCE [MRNA]</scope>
    <source>
        <strain>Sprague-Dawley</strain>
        <tissue>Brain</tissue>
    </source>
</reference>
<reference key="2">
    <citation type="journal article" date="2004" name="Genome Res.">
        <title>The status, quality, and expansion of the NIH full-length cDNA project: the Mammalian Gene Collection (MGC).</title>
        <authorList>
            <consortium name="The MGC Project Team"/>
        </authorList>
    </citation>
    <scope>NUCLEOTIDE SEQUENCE [LARGE SCALE MRNA]</scope>
    <source>
        <tissue>Prostate</tissue>
    </source>
</reference>
<comment type="function">
    <text>Plasma membrane-associated small GTPase which cycles between an active GTP-bound and an inactive GDP-bound state. In active state binds to a variety of effector proteins to regulate cellular responses. Involved in epithelial cell polarization processes. May play a role in CFTR trafficking to the plasma membrane. Causes the formation of thin, actin-rich surface projections called filopodia.</text>
</comment>
<comment type="activity regulation">
    <text evidence="1">Regulated by guanine nucleotide exchange factors (GEFs) which promote the exchange of bound GDP for free GTP, GTPase activating proteins (GAPs) which increase the GTP hydrolysis activity, and GDP dissociation inhibitors which inhibit the dissociation of the nucleotide from the GTPase.</text>
</comment>
<comment type="subunit">
    <text evidence="1">Interacts with CDC42EP1, CDC42EP2, CDC42EP3, CDC42EP4 and EXO70 in a GTP-dependent manner. Interacts with ARHGAP33/TCGAP and GOPC (By similarity). Interacts with PARD6A, PARD6G (and probably PARD6B) in a GTP-dependent manner. Part of a quaternary complex containing PARD3, some PARD6 protein (PARD6A, PARD6B or PARD6G) and some atypical PKC protein (PRKCI or PRKCZ).</text>
</comment>
<comment type="subcellular location">
    <subcellularLocation>
        <location evidence="1">Cytoplasm</location>
    </subcellularLocation>
    <subcellularLocation>
        <location evidence="1">Cell membrane</location>
        <topology evidence="1">Lipid-anchor</topology>
    </subcellularLocation>
</comment>
<comment type="PTM">
    <text evidence="1">May be post-translationally modified by both palmitoylation and polyisoprenylation.</text>
</comment>
<comment type="similarity">
    <text evidence="2">Belongs to the small GTPase superfamily. Rho family.</text>
</comment>
<name>RHOQ_RAT</name>
<evidence type="ECO:0000250" key="1"/>
<evidence type="ECO:0000305" key="2"/>
<accession>Q9JJL4</accession>
<feature type="chain" id="PRO_0000198873" description="Rho-related GTP-binding protein RhoQ">
    <location>
        <begin position="1"/>
        <end position="202"/>
    </location>
</feature>
<feature type="propeptide" id="PRO_0000281224" description="Removed in mature form" evidence="1">
    <location>
        <begin position="203"/>
        <end position="205"/>
    </location>
</feature>
<feature type="short sequence motif" description="Effector region" evidence="1">
    <location>
        <begin position="38"/>
        <end position="46"/>
    </location>
</feature>
<feature type="binding site" evidence="1">
    <location>
        <begin position="16"/>
        <end position="23"/>
    </location>
    <ligand>
        <name>GTP</name>
        <dbReference type="ChEBI" id="CHEBI:37565"/>
    </ligand>
</feature>
<feature type="binding site" evidence="1">
    <location>
        <begin position="63"/>
        <end position="67"/>
    </location>
    <ligand>
        <name>GTP</name>
        <dbReference type="ChEBI" id="CHEBI:37565"/>
    </ligand>
</feature>
<feature type="binding site" evidence="1">
    <location>
        <begin position="121"/>
        <end position="124"/>
    </location>
    <ligand>
        <name>GTP</name>
        <dbReference type="ChEBI" id="CHEBI:37565"/>
    </ligand>
</feature>
<feature type="modified residue" description="Cysteine methyl ester" evidence="1">
    <location>
        <position position="202"/>
    </location>
</feature>
<feature type="lipid moiety-binding region" description="S-farnesyl cysteine" evidence="1">
    <location>
        <position position="202"/>
    </location>
</feature>
<protein>
    <recommendedName>
        <fullName>Rho-related GTP-binding protein RhoQ</fullName>
    </recommendedName>
    <alternativeName>
        <fullName>Ras-like protein TC10</fullName>
    </alternativeName>
</protein>
<organism>
    <name type="scientific">Rattus norvegicus</name>
    <name type="common">Rat</name>
    <dbReference type="NCBI Taxonomy" id="10116"/>
    <lineage>
        <taxon>Eukaryota</taxon>
        <taxon>Metazoa</taxon>
        <taxon>Chordata</taxon>
        <taxon>Craniata</taxon>
        <taxon>Vertebrata</taxon>
        <taxon>Euteleostomi</taxon>
        <taxon>Mammalia</taxon>
        <taxon>Eutheria</taxon>
        <taxon>Euarchontoglires</taxon>
        <taxon>Glires</taxon>
        <taxon>Rodentia</taxon>
        <taxon>Myomorpha</taxon>
        <taxon>Muroidea</taxon>
        <taxon>Muridae</taxon>
        <taxon>Murinae</taxon>
        <taxon>Rattus</taxon>
    </lineage>
</organism>
<gene>
    <name type="primary">Rhoq</name>
    <name type="synonym">Tc10</name>
</gene>